<dbReference type="EC" id="3.1.1.4" evidence="7"/>
<dbReference type="SMR" id="P86907"/>
<dbReference type="GO" id="GO:0005576">
    <property type="term" value="C:extracellular region"/>
    <property type="evidence" value="ECO:0007669"/>
    <property type="project" value="UniProtKB-SubCell"/>
</dbReference>
<dbReference type="GO" id="GO:0005509">
    <property type="term" value="F:calcium ion binding"/>
    <property type="evidence" value="ECO:0007669"/>
    <property type="project" value="InterPro"/>
</dbReference>
<dbReference type="GO" id="GO:0047498">
    <property type="term" value="F:calcium-dependent phospholipase A2 activity"/>
    <property type="evidence" value="ECO:0007669"/>
    <property type="project" value="TreeGrafter"/>
</dbReference>
<dbReference type="GO" id="GO:0004623">
    <property type="term" value="F:phospholipase A2 activity"/>
    <property type="evidence" value="ECO:0000314"/>
    <property type="project" value="UniProtKB"/>
</dbReference>
<dbReference type="GO" id="GO:0005543">
    <property type="term" value="F:phospholipid binding"/>
    <property type="evidence" value="ECO:0007669"/>
    <property type="project" value="TreeGrafter"/>
</dbReference>
<dbReference type="GO" id="GO:0090729">
    <property type="term" value="F:toxin activity"/>
    <property type="evidence" value="ECO:0007669"/>
    <property type="project" value="UniProtKB-KW"/>
</dbReference>
<dbReference type="GO" id="GO:0050482">
    <property type="term" value="P:arachidonate secretion"/>
    <property type="evidence" value="ECO:0007669"/>
    <property type="project" value="InterPro"/>
</dbReference>
<dbReference type="GO" id="GO:0016042">
    <property type="term" value="P:lipid catabolic process"/>
    <property type="evidence" value="ECO:0000314"/>
    <property type="project" value="UniProtKB"/>
</dbReference>
<dbReference type="GO" id="GO:0042130">
    <property type="term" value="P:negative regulation of T cell proliferation"/>
    <property type="evidence" value="ECO:0007669"/>
    <property type="project" value="TreeGrafter"/>
</dbReference>
<dbReference type="GO" id="GO:0006644">
    <property type="term" value="P:phospholipid metabolic process"/>
    <property type="evidence" value="ECO:0000314"/>
    <property type="project" value="UniProtKB"/>
</dbReference>
<dbReference type="CDD" id="cd00125">
    <property type="entry name" value="PLA2c"/>
    <property type="match status" value="1"/>
</dbReference>
<dbReference type="FunFam" id="1.20.90.10:FF:000001">
    <property type="entry name" value="Basic phospholipase A2 homolog"/>
    <property type="match status" value="1"/>
</dbReference>
<dbReference type="Gene3D" id="1.20.90.10">
    <property type="entry name" value="Phospholipase A2 domain"/>
    <property type="match status" value="1"/>
</dbReference>
<dbReference type="InterPro" id="IPR001211">
    <property type="entry name" value="PLipase_A2"/>
</dbReference>
<dbReference type="InterPro" id="IPR033112">
    <property type="entry name" value="PLipase_A2_Asp_AS"/>
</dbReference>
<dbReference type="InterPro" id="IPR016090">
    <property type="entry name" value="PLipase_A2_dom"/>
</dbReference>
<dbReference type="InterPro" id="IPR036444">
    <property type="entry name" value="PLipase_A2_dom_sf"/>
</dbReference>
<dbReference type="InterPro" id="IPR033113">
    <property type="entry name" value="PLipase_A2_His_AS"/>
</dbReference>
<dbReference type="PANTHER" id="PTHR11716">
    <property type="entry name" value="PHOSPHOLIPASE A2 FAMILY MEMBER"/>
    <property type="match status" value="1"/>
</dbReference>
<dbReference type="PANTHER" id="PTHR11716:SF9">
    <property type="entry name" value="PHOSPHOLIPASE A2, MEMBRANE ASSOCIATED"/>
    <property type="match status" value="1"/>
</dbReference>
<dbReference type="Pfam" id="PF00068">
    <property type="entry name" value="Phospholip_A2_1"/>
    <property type="match status" value="1"/>
</dbReference>
<dbReference type="PRINTS" id="PR00389">
    <property type="entry name" value="PHPHLIPASEA2"/>
</dbReference>
<dbReference type="SMART" id="SM00085">
    <property type="entry name" value="PA2c"/>
    <property type="match status" value="1"/>
</dbReference>
<dbReference type="SUPFAM" id="SSF48619">
    <property type="entry name" value="Phospholipase A2, PLA2"/>
    <property type="match status" value="1"/>
</dbReference>
<dbReference type="PROSITE" id="PS00119">
    <property type="entry name" value="PA2_ASP"/>
    <property type="match status" value="1"/>
</dbReference>
<dbReference type="PROSITE" id="PS00118">
    <property type="entry name" value="PA2_HIS"/>
    <property type="match status" value="1"/>
</dbReference>
<name>PA2A_BOTAM</name>
<sequence>HLMQFETLIKKIAGRSGVWFYGFYGCYCGSGGRGKPKDATDRCCFVHDCCYGKVTGCDPKMDFYTYSEENGVVVCGGDDPCKKQICECDRVAATCFRDNKTYDNNKYWFYPAKNCQEESEPC</sequence>
<organism>
    <name type="scientific">Bothrops ammodytoides</name>
    <name type="common">Yararanata</name>
    <name type="synonym">Patagonian lancehead</name>
    <dbReference type="NCBI Taxonomy" id="169857"/>
    <lineage>
        <taxon>Eukaryota</taxon>
        <taxon>Metazoa</taxon>
        <taxon>Chordata</taxon>
        <taxon>Craniata</taxon>
        <taxon>Vertebrata</taxon>
        <taxon>Euteleostomi</taxon>
        <taxon>Lepidosauria</taxon>
        <taxon>Squamata</taxon>
        <taxon>Bifurcata</taxon>
        <taxon>Unidentata</taxon>
        <taxon>Episquamata</taxon>
        <taxon>Toxicofera</taxon>
        <taxon>Serpentes</taxon>
        <taxon>Colubroidea</taxon>
        <taxon>Viperidae</taxon>
        <taxon>Crotalinae</taxon>
        <taxon>Bothrops</taxon>
    </lineage>
</organism>
<keyword id="KW-0106">Calcium</keyword>
<keyword id="KW-0903">Direct protein sequencing</keyword>
<keyword id="KW-1015">Disulfide bond</keyword>
<keyword id="KW-0378">Hydrolase</keyword>
<keyword id="KW-0442">Lipid degradation</keyword>
<keyword id="KW-0443">Lipid metabolism</keyword>
<keyword id="KW-0479">Metal-binding</keyword>
<keyword id="KW-0964">Secreted</keyword>
<keyword id="KW-0800">Toxin</keyword>
<accession>P86907</accession>
<comment type="function">
    <text evidence="7">Snake venom phospholipase A2 (PLA2) that displays low systemic toxicity and causes severe symptoms only at very high concentrations (15 mg/kg). Has neither coagulant nor anticoagulant activity. PLA2 catalyzes the calcium-dependent hydrolysis of the 2-acyl groups in 3-sn-phosphoglycerides.</text>
</comment>
<comment type="catalytic activity">
    <reaction evidence="5 6 7">
        <text>a 1,2-diacyl-sn-glycero-3-phosphocholine + H2O = a 1-acyl-sn-glycero-3-phosphocholine + a fatty acid + H(+)</text>
        <dbReference type="Rhea" id="RHEA:15801"/>
        <dbReference type="ChEBI" id="CHEBI:15377"/>
        <dbReference type="ChEBI" id="CHEBI:15378"/>
        <dbReference type="ChEBI" id="CHEBI:28868"/>
        <dbReference type="ChEBI" id="CHEBI:57643"/>
        <dbReference type="ChEBI" id="CHEBI:58168"/>
        <dbReference type="EC" id="3.1.1.4"/>
    </reaction>
</comment>
<comment type="cofactor">
    <cofactor evidence="3">
        <name>Ca(2+)</name>
        <dbReference type="ChEBI" id="CHEBI:29108"/>
    </cofactor>
    <text evidence="3">Binds 1 Ca(2+) ion per subunit.</text>
</comment>
<comment type="subcellular location">
    <subcellularLocation>
        <location evidence="7">Secreted</location>
    </subcellularLocation>
</comment>
<comment type="tissue specificity">
    <text evidence="10">Expressed by the venom gland.</text>
</comment>
<comment type="PTM">
    <text evidence="7">Contains 7 disulfide bonds.</text>
</comment>
<comment type="mass spectrometry"/>
<comment type="toxic dose">
    <text evidence="7">LD(50) is 292.5 ug/kg by intravenous injection into mice.</text>
</comment>
<comment type="similarity">
    <text evidence="4">Belongs to the phospholipase A2 family. Group II subfamily. D49 sub-subfamily.</text>
</comment>
<feature type="chain" id="PRO_0000430167" description="Acidic phospholipase A2">
    <location>
        <begin position="1"/>
        <end position="122"/>
    </location>
</feature>
<feature type="active site" evidence="2">
    <location>
        <position position="47"/>
    </location>
</feature>
<feature type="active site" evidence="2">
    <location>
        <position position="89"/>
    </location>
</feature>
<feature type="binding site" evidence="3">
    <location>
        <position position="27"/>
    </location>
    <ligand>
        <name>Ca(2+)</name>
        <dbReference type="ChEBI" id="CHEBI:29108"/>
    </ligand>
</feature>
<feature type="binding site" evidence="3">
    <location>
        <position position="29"/>
    </location>
    <ligand>
        <name>Ca(2+)</name>
        <dbReference type="ChEBI" id="CHEBI:29108"/>
    </ligand>
</feature>
<feature type="binding site" evidence="3">
    <location>
        <position position="31"/>
    </location>
    <ligand>
        <name>Ca(2+)</name>
        <dbReference type="ChEBI" id="CHEBI:29108"/>
    </ligand>
</feature>
<feature type="binding site" evidence="3">
    <location>
        <position position="48"/>
    </location>
    <ligand>
        <name>Ca(2+)</name>
        <dbReference type="ChEBI" id="CHEBI:29108"/>
    </ligand>
</feature>
<feature type="disulfide bond" evidence="1">
    <location>
        <begin position="26"/>
        <end position="115"/>
    </location>
</feature>
<feature type="disulfide bond" evidence="1">
    <location>
        <begin position="28"/>
        <end position="44"/>
    </location>
</feature>
<feature type="disulfide bond" evidence="1">
    <location>
        <begin position="43"/>
        <end position="95"/>
    </location>
</feature>
<feature type="disulfide bond" evidence="1">
    <location>
        <begin position="49"/>
        <end position="122"/>
    </location>
</feature>
<feature type="disulfide bond" evidence="1">
    <location>
        <begin position="50"/>
        <end position="88"/>
    </location>
</feature>
<feature type="disulfide bond" evidence="1">
    <location>
        <begin position="57"/>
        <end position="81"/>
    </location>
</feature>
<feature type="disulfide bond" evidence="1">
    <location>
        <begin position="75"/>
        <end position="86"/>
    </location>
</feature>
<proteinExistence type="evidence at protein level"/>
<evidence type="ECO:0000250" key="1">
    <source>
        <dbReference type="UniProtKB" id="O42191"/>
    </source>
</evidence>
<evidence type="ECO:0000250" key="2">
    <source>
        <dbReference type="UniProtKB" id="P06859"/>
    </source>
</evidence>
<evidence type="ECO:0000250" key="3">
    <source>
        <dbReference type="UniProtKB" id="P20249"/>
    </source>
</evidence>
<evidence type="ECO:0000255" key="4"/>
<evidence type="ECO:0000255" key="5">
    <source>
        <dbReference type="PROSITE-ProRule" id="PRU10035"/>
    </source>
</evidence>
<evidence type="ECO:0000255" key="6">
    <source>
        <dbReference type="PROSITE-ProRule" id="PRU10036"/>
    </source>
</evidence>
<evidence type="ECO:0000269" key="7">
    <source>
    </source>
</evidence>
<evidence type="ECO:0000303" key="8">
    <source>
    </source>
</evidence>
<evidence type="ECO:0000305" key="9"/>
<evidence type="ECO:0000305" key="10">
    <source>
    </source>
</evidence>
<reference evidence="9" key="1">
    <citation type="journal article" date="2012" name="Toxicon">
        <title>Isolation, amino acid sequence and biological characterization of an 'aspartic-49' phospholipase A(2) from Bothrops (Rhinocerophis) ammodytoides venom.</title>
        <authorList>
            <person name="Clement H."/>
            <person name="Costa de Oliveira V."/>
            <person name="Zamudio F.Z."/>
            <person name="Lago N.R."/>
            <person name="Valdez-Cruz N.A."/>
            <person name="Bernard Valle M."/>
            <person name="Hajos S.E."/>
            <person name="Alagon A."/>
            <person name="Possani L.D."/>
            <person name="de Roodt A.R."/>
        </authorList>
    </citation>
    <scope>PROTEIN SEQUENCE</scope>
    <scope>FUNCTION</scope>
    <scope>CATALYTIC ACTIVITY</scope>
    <scope>SUBCELLULAR LOCATION</scope>
    <scope>DISULFIDE BONDS</scope>
    <scope>MASS SPECTROMETRY</scope>
    <scope>TOXIC DOSE</scope>
    <source>
        <tissue evidence="7">Venom</tissue>
    </source>
</reference>
<protein>
    <recommendedName>
        <fullName evidence="8 10">Acidic phospholipase A2</fullName>
        <shortName evidence="3">svPLA2</shortName>
        <ecNumber evidence="7">3.1.1.4</ecNumber>
    </recommendedName>
    <alternativeName>
        <fullName evidence="3">Phosphatidylcholine 2-acylhydrolase</fullName>
    </alternativeName>
</protein>